<sequence>MHFLVALVLLGQIIGSTLSSQVRGDLECNDREAKEWADQAVRYINEHKLHEYKQALNVIKNIVVVPWNGDLVAVFLKLNLLETECHVLDPTPVEKCTIRPQQNHAVEMDCDAKIMFDVETFKQDVFVKCHSTPDSVEDVRRNCLKCPILLSPSDPHVVDSVEYVLNKHNEQLSGHVYEVLEISRGQHKYEPEAFYVEFAIVEVNCTAQEAHDDHHHCHPNTAGEDHIAFCKATVFRSHASLEKPKHENFESDCVILDVKEGHAHSHLIEHHIGKYSTSPGQNSTVECVAECPVAFVNKEVPTDISDRHTTPVKGCPGKILHFQL</sequence>
<protein>
    <recommendedName>
        <fullName>Antihemorrhagic factor cMSF</fullName>
    </recommendedName>
    <alternativeName>
        <fullName>Chinese mamushi serum factor</fullName>
    </alternativeName>
</protein>
<evidence type="ECO:0000250" key="1"/>
<evidence type="ECO:0000255" key="2"/>
<evidence type="ECO:0000255" key="3">
    <source>
        <dbReference type="PROSITE-ProRule" id="PRU00861"/>
    </source>
</evidence>
<evidence type="ECO:0000269" key="4">
    <source>
    </source>
</evidence>
<evidence type="ECO:0000305" key="5"/>
<comment type="function">
    <text evidence="4">Suppress hemorrhage induced by metalloproteinases from the same venom (brevilysin-H3, -H4, -H6) and from habu venom (metalloproteinases HR1A and HR1B). The non-hemorrhagic brevilysin-L4 is not inhibited by cMSF. Does not inhibit serine and cysteine proteases such as trypsin, chymotrypsin, thermolysin, and papain. The inhibition may occur by formation of a non-covalent complex between this protein and the proteinases at their metalloproteinase domains.</text>
</comment>
<comment type="subunit">
    <text evidence="1">Homodimer.</text>
</comment>
<comment type="subcellular location">
    <subcellularLocation>
        <location>Secreted</location>
    </subcellularLocation>
</comment>
<comment type="tissue specificity">
    <text>Expressed by the liver.</text>
</comment>
<comment type="mass spectrometry"/>
<comment type="similarity">
    <text evidence="3">Belongs to the fetuin family.</text>
</comment>
<accession>Q5KQS4</accession>
<feature type="signal peptide" evidence="4">
    <location>
        <begin position="1"/>
        <end position="19"/>
    </location>
</feature>
<feature type="chain" id="PRO_5000052209" description="Antihemorrhagic factor cMSF">
    <location>
        <begin position="20"/>
        <end position="324"/>
    </location>
</feature>
<feature type="domain" description="Cystatin fetuin-A-type 1" evidence="3">
    <location>
        <begin position="22"/>
        <end position="130"/>
    </location>
</feature>
<feature type="domain" description="Cystatin fetuin-A-type 2" evidence="3">
    <location>
        <begin position="141"/>
        <end position="254"/>
    </location>
</feature>
<feature type="short sequence motif" description="Cell attachment site" evidence="2">
    <location>
        <begin position="23"/>
        <end position="25"/>
    </location>
</feature>
<feature type="site" description="Cleavage; by trypsin" evidence="1">
    <location>
        <begin position="140"/>
        <end position="141"/>
    </location>
</feature>
<feature type="glycosylation site" description="N-linked (GlcNAc...) asparagine" evidence="4">
    <location>
        <position position="204"/>
    </location>
</feature>
<feature type="glycosylation site" description="N-linked (GlcNAc...) asparagine" evidence="4">
    <location>
        <position position="282"/>
    </location>
</feature>
<feature type="disulfide bond" evidence="3">
    <location>
        <begin position="28"/>
        <end position="315"/>
    </location>
</feature>
<feature type="disulfide bond" evidence="3">
    <location>
        <begin position="85"/>
        <end position="96"/>
    </location>
</feature>
<feature type="disulfide bond" evidence="3">
    <location>
        <begin position="110"/>
        <end position="129"/>
    </location>
</feature>
<feature type="disulfide bond" evidence="3">
    <location>
        <begin position="143"/>
        <end position="146"/>
    </location>
</feature>
<feature type="disulfide bond" evidence="3">
    <location>
        <begin position="205"/>
        <end position="217"/>
    </location>
</feature>
<feature type="disulfide bond" evidence="3">
    <location>
        <begin position="230"/>
        <end position="253"/>
    </location>
</feature>
<feature type="disulfide bond" evidence="5">
    <location>
        <begin position="287"/>
        <end position="291"/>
    </location>
</feature>
<dbReference type="EMBL" id="AB200169">
    <property type="protein sequence ID" value="BAD88536.1"/>
    <property type="molecule type" value="mRNA"/>
</dbReference>
<dbReference type="SMR" id="Q5KQS4"/>
<dbReference type="MEROPS" id="I25.042"/>
<dbReference type="iPTMnet" id="Q5KQS4"/>
<dbReference type="GO" id="GO:0072562">
    <property type="term" value="C:blood microparticle"/>
    <property type="evidence" value="ECO:0007669"/>
    <property type="project" value="TreeGrafter"/>
</dbReference>
<dbReference type="GO" id="GO:0031012">
    <property type="term" value="C:extracellular matrix"/>
    <property type="evidence" value="ECO:0007669"/>
    <property type="project" value="TreeGrafter"/>
</dbReference>
<dbReference type="GO" id="GO:0004869">
    <property type="term" value="F:cysteine-type endopeptidase inhibitor activity"/>
    <property type="evidence" value="ECO:0007669"/>
    <property type="project" value="InterPro"/>
</dbReference>
<dbReference type="CDD" id="cd00042">
    <property type="entry name" value="CY"/>
    <property type="match status" value="2"/>
</dbReference>
<dbReference type="FunFam" id="3.10.450.10:FF:000002">
    <property type="entry name" value="Kininogen 1"/>
    <property type="match status" value="1"/>
</dbReference>
<dbReference type="Gene3D" id="3.10.450.10">
    <property type="match status" value="2"/>
</dbReference>
<dbReference type="InterPro" id="IPR000010">
    <property type="entry name" value="Cystatin_dom"/>
</dbReference>
<dbReference type="InterPro" id="IPR025760">
    <property type="entry name" value="Cystatin_Fetuin_A"/>
</dbReference>
<dbReference type="InterPro" id="IPR046350">
    <property type="entry name" value="Cystatin_sf"/>
</dbReference>
<dbReference type="InterPro" id="IPR050735">
    <property type="entry name" value="Kininogen_Fetuin_HRG"/>
</dbReference>
<dbReference type="InterPro" id="IPR001363">
    <property type="entry name" value="Prot_inh_fetuin_CS"/>
</dbReference>
<dbReference type="PANTHER" id="PTHR13814:SF6">
    <property type="entry name" value="ALPHA-2-HS-GLYCOPROTEIN"/>
    <property type="match status" value="1"/>
</dbReference>
<dbReference type="PANTHER" id="PTHR13814">
    <property type="entry name" value="FETUIN"/>
    <property type="match status" value="1"/>
</dbReference>
<dbReference type="Pfam" id="PF00031">
    <property type="entry name" value="Cystatin"/>
    <property type="match status" value="1"/>
</dbReference>
<dbReference type="SMART" id="SM00043">
    <property type="entry name" value="CY"/>
    <property type="match status" value="2"/>
</dbReference>
<dbReference type="SUPFAM" id="SSF54403">
    <property type="entry name" value="Cystatin/monellin"/>
    <property type="match status" value="2"/>
</dbReference>
<dbReference type="PROSITE" id="PS51529">
    <property type="entry name" value="CYSTATIN_FETUIN_A"/>
    <property type="match status" value="2"/>
</dbReference>
<dbReference type="PROSITE" id="PS01254">
    <property type="entry name" value="FETUIN_1"/>
    <property type="match status" value="1"/>
</dbReference>
<dbReference type="PROSITE" id="PS01255">
    <property type="entry name" value="FETUIN_2"/>
    <property type="match status" value="1"/>
</dbReference>
<keyword id="KW-0903">Direct protein sequencing</keyword>
<keyword id="KW-1015">Disulfide bond</keyword>
<keyword id="KW-0325">Glycoprotein</keyword>
<keyword id="KW-0481">Metalloenzyme inhibitor</keyword>
<keyword id="KW-0483">Metalloprotease inhibitor</keyword>
<keyword id="KW-0646">Protease inhibitor</keyword>
<keyword id="KW-0677">Repeat</keyword>
<keyword id="KW-0964">Secreted</keyword>
<keyword id="KW-0732">Signal</keyword>
<name>FETC_GLOBR</name>
<reference key="1">
    <citation type="journal article" date="2008" name="Toxicon">
        <title>Properties and cDNA cloning of antihemorrhagic factors in sera of Chinese and Japanese mamushi (Gloydius blomhoffi).</title>
        <authorList>
            <person name="Aoki N."/>
            <person name="Tsutsumi K."/>
            <person name="Deshimaru M."/>
            <person name="Terada S."/>
        </authorList>
    </citation>
    <scope>NUCLEOTIDE SEQUENCE [MRNA]</scope>
    <scope>PROTEIN SEQUENCE OF 20-89; 189-231 AND 275-298</scope>
    <scope>FUNCTION</scope>
    <scope>GLYCOSYLATION AT ASN-204 AND ASN-282</scope>
    <scope>MASS SPECTROMETRY</scope>
    <source>
        <tissue>Liver</tissue>
        <tissue>Serum</tissue>
    </source>
</reference>
<proteinExistence type="evidence at protein level"/>
<organism>
    <name type="scientific">Gloydius brevicauda</name>
    <name type="common">Korean slamosa snake</name>
    <name type="synonym">Agkistrodon halys brevicaudus</name>
    <dbReference type="NCBI Taxonomy" id="3148161"/>
    <lineage>
        <taxon>Eukaryota</taxon>
        <taxon>Metazoa</taxon>
        <taxon>Chordata</taxon>
        <taxon>Craniata</taxon>
        <taxon>Vertebrata</taxon>
        <taxon>Euteleostomi</taxon>
        <taxon>Lepidosauria</taxon>
        <taxon>Squamata</taxon>
        <taxon>Bifurcata</taxon>
        <taxon>Unidentata</taxon>
        <taxon>Episquamata</taxon>
        <taxon>Toxicofera</taxon>
        <taxon>Serpentes</taxon>
        <taxon>Colubroidea</taxon>
        <taxon>Viperidae</taxon>
        <taxon>Crotalinae</taxon>
        <taxon>Gloydius</taxon>
    </lineage>
</organism>